<sequence>MAAGAGARPAPRWLKALTEPLSAAQLRRLEEHRYTAAGVSLLEPPLQLYWTWLLQWIPLWMAPNSITLLGLAINMLTTLVLISYCPTVTEEAPYWTYLLCALGLFIYQSLDAIDGKQARRTNSCSPLGELFDHGCDSLSTVFMAVGASIAVRLGTHPDWLFFCSFIGMFMFYCAHWQTYVSGVLRFGKVDVTEIQIALVIVFVLSTFGGATMWDYTIPILEIKLKILPVLGVVGGAIFSCSNYFHVILHGGVGKNGSTIAGTSVLSPGLHIGIIIILAIMIYKKSATNLFEKHPCLYTLMFGCVFAKVSQKLVIAHMTKSELYLQDTVFIGPGLLFLDQYFNNFVDEYIVLWIAMVISSLDMMRYFSALCLQISRHLHLSIFKTSCHQAPEQVQVLPPKSHQNNMD</sequence>
<keyword id="KW-0007">Acetylation</keyword>
<keyword id="KW-0333">Golgi apparatus</keyword>
<keyword id="KW-0444">Lipid biosynthesis</keyword>
<keyword id="KW-0443">Lipid metabolism</keyword>
<keyword id="KW-0460">Magnesium</keyword>
<keyword id="KW-0464">Manganese</keyword>
<keyword id="KW-0472">Membrane</keyword>
<keyword id="KW-0479">Metal-binding</keyword>
<keyword id="KW-0594">Phospholipid biosynthesis</keyword>
<keyword id="KW-1208">Phospholipid metabolism</keyword>
<keyword id="KW-1185">Reference proteome</keyword>
<keyword id="KW-0808">Transferase</keyword>
<keyword id="KW-0812">Transmembrane</keyword>
<keyword id="KW-1133">Transmembrane helix</keyword>
<accession>Q1LZE6</accession>
<name>CHPT1_BOVIN</name>
<evidence type="ECO:0000250" key="1">
    <source>
        <dbReference type="UniProtKB" id="Q4KLV1"/>
    </source>
</evidence>
<evidence type="ECO:0000250" key="2">
    <source>
        <dbReference type="UniProtKB" id="Q8WUD6"/>
    </source>
</evidence>
<evidence type="ECO:0000305" key="3"/>
<comment type="function">
    <text evidence="2">Catalyzes the final step of de novo phosphatidylcholine (PC) synthesis, i.e. the transfer of choline phosphate from CDP-choline to the free hydroxyl of a diacylglycerol (DAG), producing a PC. It thereby plays a central role in the formation and maintenance of vesicular membranes.</text>
</comment>
<comment type="catalytic activity">
    <reaction evidence="2">
        <text>CDP-choline + a 1,2-diacyl-sn-glycerol = a 1,2-diacyl-sn-glycero-3-phosphocholine + CMP + H(+)</text>
        <dbReference type="Rhea" id="RHEA:32939"/>
        <dbReference type="ChEBI" id="CHEBI:15378"/>
        <dbReference type="ChEBI" id="CHEBI:17815"/>
        <dbReference type="ChEBI" id="CHEBI:57643"/>
        <dbReference type="ChEBI" id="CHEBI:58779"/>
        <dbReference type="ChEBI" id="CHEBI:60377"/>
        <dbReference type="EC" id="2.7.8.2"/>
    </reaction>
    <physiologicalReaction direction="left-to-right" evidence="2">
        <dbReference type="Rhea" id="RHEA:32940"/>
    </physiologicalReaction>
</comment>
<comment type="catalytic activity">
    <reaction evidence="2">
        <text>1-octadecanoyl-2-(5Z,8Z,11Z,14Z-eicosatetraenoyl)-sn-glycerol + CDP-choline = 1-octadecanoyl-2-(5Z,8Z,11Z,14Z-eicosatetraenoyl)-sn-glycero-3-phosphocholine + CMP + H(+)</text>
        <dbReference type="Rhea" id="RHEA:54344"/>
        <dbReference type="ChEBI" id="CHEBI:15378"/>
        <dbReference type="ChEBI" id="CHEBI:58779"/>
        <dbReference type="ChEBI" id="CHEBI:60377"/>
        <dbReference type="ChEBI" id="CHEBI:74965"/>
        <dbReference type="ChEBI" id="CHEBI:75728"/>
    </reaction>
    <physiologicalReaction direction="left-to-right" evidence="2">
        <dbReference type="Rhea" id="RHEA:54345"/>
    </physiologicalReaction>
</comment>
<comment type="catalytic activity">
    <reaction evidence="2">
        <text>1-hexadecanoyl-2-(9Z-octadecenoyl)-sn-glycerol + CDP-choline = 1-hexadecanoyl-2-(9Z-octadecenoyl)-sn-glycero-3-phosphocholine + CMP + H(+)</text>
        <dbReference type="Rhea" id="RHEA:54244"/>
        <dbReference type="ChEBI" id="CHEBI:15378"/>
        <dbReference type="ChEBI" id="CHEBI:58779"/>
        <dbReference type="ChEBI" id="CHEBI:60377"/>
        <dbReference type="ChEBI" id="CHEBI:73001"/>
        <dbReference type="ChEBI" id="CHEBI:75466"/>
    </reaction>
    <physiologicalReaction direction="left-to-right" evidence="2">
        <dbReference type="Rhea" id="RHEA:54245"/>
    </physiologicalReaction>
</comment>
<comment type="catalytic activity">
    <reaction evidence="2">
        <text>1-hexadecanoyl-2-(4Z,7Z,10Z,13Z,16Z,19Z-docosahexaenoyl)-sn-glycerol + CDP-choline = 1-hexadecanoyl-2-(4Z,7Z,10Z,13Z,16Z,19Z-docosahexaenoyl)-sn-glycero-3-phosphocholine + CMP + H(+)</text>
        <dbReference type="Rhea" id="RHEA:54332"/>
        <dbReference type="ChEBI" id="CHEBI:15378"/>
        <dbReference type="ChEBI" id="CHEBI:58779"/>
        <dbReference type="ChEBI" id="CHEBI:60377"/>
        <dbReference type="ChEBI" id="CHEBI:74963"/>
        <dbReference type="ChEBI" id="CHEBI:82949"/>
    </reaction>
    <physiologicalReaction direction="left-to-right" evidence="2">
        <dbReference type="Rhea" id="RHEA:54333"/>
    </physiologicalReaction>
</comment>
<comment type="catalytic activity">
    <reaction evidence="1">
        <text>1,2-dioctanoyl-sn-glycerol + CDP-choline = 1,2-dioctanoyl-sn-glycero-3-phosphocholine + CMP + H(+)</text>
        <dbReference type="Rhea" id="RHEA:54232"/>
        <dbReference type="ChEBI" id="CHEBI:15378"/>
        <dbReference type="ChEBI" id="CHEBI:58779"/>
        <dbReference type="ChEBI" id="CHEBI:60377"/>
        <dbReference type="ChEBI" id="CHEBI:76979"/>
        <dbReference type="ChEBI" id="CHEBI:78228"/>
    </reaction>
    <physiologicalReaction direction="left-to-right" evidence="1">
        <dbReference type="Rhea" id="RHEA:54233"/>
    </physiologicalReaction>
</comment>
<comment type="cofactor">
    <cofactor evidence="2">
        <name>Mg(2+)</name>
        <dbReference type="ChEBI" id="CHEBI:18420"/>
    </cofactor>
    <cofactor evidence="2">
        <name>Mn(2+)</name>
        <dbReference type="ChEBI" id="CHEBI:29035"/>
    </cofactor>
</comment>
<comment type="pathway">
    <text evidence="2">Phospholipid metabolism; phosphatidylcholine biosynthesis; phosphatidylcholine from phosphocholine: step 2/2.</text>
</comment>
<comment type="subcellular location">
    <subcellularLocation>
        <location evidence="2">Golgi apparatus membrane</location>
        <topology evidence="2">Multi-pass membrane protein</topology>
    </subcellularLocation>
</comment>
<comment type="similarity">
    <text evidence="3">Belongs to the CDP-alcohol phosphatidyltransferase class-I family.</text>
</comment>
<protein>
    <recommendedName>
        <fullName evidence="3">Cholinephosphotransferase 1</fullName>
        <ecNumber evidence="2">2.7.8.2</ecNumber>
    </recommendedName>
    <alternativeName>
        <fullName>Diacylglycerol cholinephosphotransferase 1</fullName>
    </alternativeName>
</protein>
<feature type="initiator methionine" description="Removed" evidence="2">
    <location>
        <position position="1"/>
    </location>
</feature>
<feature type="chain" id="PRO_0000289251" description="Cholinephosphotransferase 1">
    <location>
        <begin position="2"/>
        <end position="406"/>
    </location>
</feature>
<feature type="topological domain" description="Cytoplasmic" evidence="3">
    <location>
        <begin position="2"/>
        <end position="62"/>
    </location>
</feature>
<feature type="transmembrane region" description="Helical; Name=1" evidence="1">
    <location>
        <begin position="63"/>
        <end position="83"/>
    </location>
</feature>
<feature type="topological domain" description="Lumenal" evidence="3">
    <location>
        <begin position="84"/>
        <end position="93"/>
    </location>
</feature>
<feature type="transmembrane region" description="Helical; Name=2" evidence="1">
    <location>
        <begin position="94"/>
        <end position="118"/>
    </location>
</feature>
<feature type="topological domain" description="Cytoplasmic" evidence="3">
    <location>
        <begin position="119"/>
        <end position="125"/>
    </location>
</feature>
<feature type="transmembrane region" description="Helical; Name=3" evidence="1">
    <location>
        <begin position="126"/>
        <end position="150"/>
    </location>
</feature>
<feature type="topological domain" description="Lumenal" evidence="3">
    <location>
        <begin position="151"/>
        <end position="160"/>
    </location>
</feature>
<feature type="transmembrane region" description="Helical; Name=4" evidence="1">
    <location>
        <begin position="161"/>
        <end position="179"/>
    </location>
</feature>
<feature type="topological domain" description="Cytoplasmic" evidence="3">
    <location>
        <begin position="180"/>
        <end position="190"/>
    </location>
</feature>
<feature type="transmembrane region" description="Helical; Name=5" evidence="1">
    <location>
        <begin position="191"/>
        <end position="207"/>
    </location>
</feature>
<feature type="topological domain" description="Lumenal" evidence="3">
    <location>
        <begin position="208"/>
        <end position="222"/>
    </location>
</feature>
<feature type="transmembrane region" description="Helical; Name=6" evidence="1">
    <location>
        <begin position="223"/>
        <end position="248"/>
    </location>
</feature>
<feature type="topological domain" description="Cytoplasmic" evidence="3">
    <location>
        <begin position="249"/>
        <end position="265"/>
    </location>
</feature>
<feature type="transmembrane region" description="Helical; Name=7" evidence="1">
    <location>
        <begin position="266"/>
        <end position="281"/>
    </location>
</feature>
<feature type="topological domain" description="Lumenal" evidence="3">
    <location>
        <begin position="282"/>
        <end position="293"/>
    </location>
</feature>
<feature type="transmembrane region" description="Helical; Name=8" evidence="1">
    <location>
        <begin position="294"/>
        <end position="316"/>
    </location>
</feature>
<feature type="topological domain" description="Cytoplasmic" evidence="3">
    <location>
        <begin position="317"/>
        <end position="329"/>
    </location>
</feature>
<feature type="transmembrane region" description="Helical; Name=9" evidence="1">
    <location>
        <begin position="330"/>
        <end position="339"/>
    </location>
</feature>
<feature type="topological domain" description="Lumenal" evidence="3">
    <location>
        <begin position="340"/>
        <end position="346"/>
    </location>
</feature>
<feature type="transmembrane region" description="Helical; Name=10" evidence="1">
    <location>
        <begin position="347"/>
        <end position="376"/>
    </location>
</feature>
<feature type="topological domain" description="Cytoplasmic" evidence="3">
    <location>
        <begin position="377"/>
        <end position="406"/>
    </location>
</feature>
<feature type="active site" description="Proton acceptor" evidence="1">
    <location>
        <position position="133"/>
    </location>
</feature>
<feature type="binding site" evidence="1">
    <location>
        <position position="64"/>
    </location>
    <ligand>
        <name>CDP-choline</name>
        <dbReference type="ChEBI" id="CHEBI:58779"/>
    </ligand>
</feature>
<feature type="binding site" evidence="1">
    <location>
        <position position="111"/>
    </location>
    <ligand>
        <name>Mg(2+)</name>
        <dbReference type="ChEBI" id="CHEBI:18420"/>
        <label>1</label>
    </ligand>
</feature>
<feature type="binding site" evidence="1">
    <location>
        <position position="111"/>
    </location>
    <ligand>
        <name>Mg(2+)</name>
        <dbReference type="ChEBI" id="CHEBI:18420"/>
        <label>2</label>
    </ligand>
</feature>
<feature type="binding site" evidence="1">
    <location>
        <position position="114"/>
    </location>
    <ligand>
        <name>Mg(2+)</name>
        <dbReference type="ChEBI" id="CHEBI:18420"/>
        <label>1</label>
    </ligand>
</feature>
<feature type="binding site" evidence="1">
    <location>
        <position position="119"/>
    </location>
    <ligand>
        <name>CDP-choline</name>
        <dbReference type="ChEBI" id="CHEBI:58779"/>
    </ligand>
</feature>
<feature type="binding site" evidence="1">
    <location>
        <position position="132"/>
    </location>
    <ligand>
        <name>Mg(2+)</name>
        <dbReference type="ChEBI" id="CHEBI:18420"/>
        <label>1</label>
    </ligand>
</feature>
<feature type="binding site" evidence="1">
    <location>
        <position position="132"/>
    </location>
    <ligand>
        <name>Mg(2+)</name>
        <dbReference type="ChEBI" id="CHEBI:18420"/>
        <label>2</label>
    </ligand>
</feature>
<feature type="binding site" evidence="1">
    <location>
        <position position="136"/>
    </location>
    <ligand>
        <name>Mg(2+)</name>
        <dbReference type="ChEBI" id="CHEBI:18420"/>
        <label>2</label>
    </ligand>
</feature>
<feature type="site" description="Increases basicity of active site His" evidence="1">
    <location>
        <position position="129"/>
    </location>
</feature>
<feature type="modified residue" description="N-acetylalanine" evidence="2">
    <location>
        <position position="2"/>
    </location>
</feature>
<organism>
    <name type="scientific">Bos taurus</name>
    <name type="common">Bovine</name>
    <dbReference type="NCBI Taxonomy" id="9913"/>
    <lineage>
        <taxon>Eukaryota</taxon>
        <taxon>Metazoa</taxon>
        <taxon>Chordata</taxon>
        <taxon>Craniata</taxon>
        <taxon>Vertebrata</taxon>
        <taxon>Euteleostomi</taxon>
        <taxon>Mammalia</taxon>
        <taxon>Eutheria</taxon>
        <taxon>Laurasiatheria</taxon>
        <taxon>Artiodactyla</taxon>
        <taxon>Ruminantia</taxon>
        <taxon>Pecora</taxon>
        <taxon>Bovidae</taxon>
        <taxon>Bovinae</taxon>
        <taxon>Bos</taxon>
    </lineage>
</organism>
<dbReference type="EC" id="2.7.8.2" evidence="2"/>
<dbReference type="EMBL" id="BC116046">
    <property type="protein sequence ID" value="AAI16047.1"/>
    <property type="molecule type" value="mRNA"/>
</dbReference>
<dbReference type="RefSeq" id="NP_001068975.1">
    <property type="nucleotide sequence ID" value="NM_001075507.1"/>
</dbReference>
<dbReference type="SMR" id="Q1LZE6"/>
<dbReference type="FunCoup" id="Q1LZE6">
    <property type="interactions" value="1068"/>
</dbReference>
<dbReference type="STRING" id="9913.ENSBTAP00000073107"/>
<dbReference type="PaxDb" id="9913-ENSBTAP00000003236"/>
<dbReference type="Ensembl" id="ENSBTAT00000003236.5">
    <property type="protein sequence ID" value="ENSBTAP00000003236.4"/>
    <property type="gene ID" value="ENSBTAG00000002490.6"/>
</dbReference>
<dbReference type="GeneID" id="511291"/>
<dbReference type="KEGG" id="bta:511291"/>
<dbReference type="CTD" id="56994"/>
<dbReference type="VEuPathDB" id="HostDB:ENSBTAG00000002490"/>
<dbReference type="VGNC" id="VGNC:27314">
    <property type="gene designation" value="CHPT1"/>
</dbReference>
<dbReference type="eggNOG" id="KOG2877">
    <property type="taxonomic scope" value="Eukaryota"/>
</dbReference>
<dbReference type="GeneTree" id="ENSGT00950000183117"/>
<dbReference type="HOGENOM" id="CLU_035066_1_0_1"/>
<dbReference type="InParanoid" id="Q1LZE6"/>
<dbReference type="OrthoDB" id="196717at2759"/>
<dbReference type="TreeFam" id="TF313270"/>
<dbReference type="Reactome" id="R-BTA-1483191">
    <property type="pathway name" value="Synthesis of PC"/>
</dbReference>
<dbReference type="UniPathway" id="UPA00753">
    <property type="reaction ID" value="UER00740"/>
</dbReference>
<dbReference type="Proteomes" id="UP000009136">
    <property type="component" value="Chromosome 5"/>
</dbReference>
<dbReference type="Bgee" id="ENSBTAG00000002490">
    <property type="expression patterns" value="Expressed in liver and 106 other cell types or tissues"/>
</dbReference>
<dbReference type="GO" id="GO:0005789">
    <property type="term" value="C:endoplasmic reticulum membrane"/>
    <property type="evidence" value="ECO:0000318"/>
    <property type="project" value="GO_Central"/>
</dbReference>
<dbReference type="GO" id="GO:0005794">
    <property type="term" value="C:Golgi apparatus"/>
    <property type="evidence" value="ECO:0000318"/>
    <property type="project" value="GO_Central"/>
</dbReference>
<dbReference type="GO" id="GO:0000139">
    <property type="term" value="C:Golgi membrane"/>
    <property type="evidence" value="ECO:0007669"/>
    <property type="project" value="UniProtKB-SubCell"/>
</dbReference>
<dbReference type="GO" id="GO:0004142">
    <property type="term" value="F:diacylglycerol cholinephosphotransferase activity"/>
    <property type="evidence" value="ECO:0000318"/>
    <property type="project" value="GO_Central"/>
</dbReference>
<dbReference type="GO" id="GO:0046872">
    <property type="term" value="F:metal ion binding"/>
    <property type="evidence" value="ECO:0007669"/>
    <property type="project" value="UniProtKB-KW"/>
</dbReference>
<dbReference type="FunFam" id="1.20.120.1760:FF:000002">
    <property type="entry name" value="Choline/ethanolamine phosphotransferase 1"/>
    <property type="match status" value="1"/>
</dbReference>
<dbReference type="Gene3D" id="1.20.120.1760">
    <property type="match status" value="1"/>
</dbReference>
<dbReference type="InterPro" id="IPR000462">
    <property type="entry name" value="CDP-OH_P_trans"/>
</dbReference>
<dbReference type="InterPro" id="IPR043130">
    <property type="entry name" value="CDP-OH_PTrfase_TM_dom"/>
</dbReference>
<dbReference type="InterPro" id="IPR048254">
    <property type="entry name" value="CDP_ALCOHOL_P_TRANSF_CS"/>
</dbReference>
<dbReference type="InterPro" id="IPR014472">
    <property type="entry name" value="CHOPT"/>
</dbReference>
<dbReference type="PANTHER" id="PTHR10414:SF32">
    <property type="entry name" value="CHOLINEPHOSPHOTRANSFERASE 1"/>
    <property type="match status" value="1"/>
</dbReference>
<dbReference type="PANTHER" id="PTHR10414">
    <property type="entry name" value="ETHANOLAMINEPHOSPHOTRANSFERASE"/>
    <property type="match status" value="1"/>
</dbReference>
<dbReference type="Pfam" id="PF01066">
    <property type="entry name" value="CDP-OH_P_transf"/>
    <property type="match status" value="1"/>
</dbReference>
<dbReference type="PIRSF" id="PIRSF015665">
    <property type="entry name" value="CHOPT"/>
    <property type="match status" value="1"/>
</dbReference>
<dbReference type="PROSITE" id="PS00379">
    <property type="entry name" value="CDP_ALCOHOL_P_TRANSF"/>
    <property type="match status" value="1"/>
</dbReference>
<proteinExistence type="evidence at transcript level"/>
<gene>
    <name type="primary">CHPT1</name>
    <name type="synonym">CPT1</name>
</gene>
<reference key="1">
    <citation type="submission" date="2006-05" db="EMBL/GenBank/DDBJ databases">
        <authorList>
            <consortium name="NIH - Mammalian Gene Collection (MGC) project"/>
        </authorList>
    </citation>
    <scope>NUCLEOTIDE SEQUENCE [LARGE SCALE MRNA]</scope>
    <source>
        <strain>Hereford</strain>
        <tissue>Hippocampus</tissue>
    </source>
</reference>